<reference key="1">
    <citation type="journal article" date="2005" name="Nature">
        <title>The genome of the social amoeba Dictyostelium discoideum.</title>
        <authorList>
            <person name="Eichinger L."/>
            <person name="Pachebat J.A."/>
            <person name="Gloeckner G."/>
            <person name="Rajandream M.A."/>
            <person name="Sucgang R."/>
            <person name="Berriman M."/>
            <person name="Song J."/>
            <person name="Olsen R."/>
            <person name="Szafranski K."/>
            <person name="Xu Q."/>
            <person name="Tunggal B."/>
            <person name="Kummerfeld S."/>
            <person name="Madera M."/>
            <person name="Konfortov B.A."/>
            <person name="Rivero F."/>
            <person name="Bankier A.T."/>
            <person name="Lehmann R."/>
            <person name="Hamlin N."/>
            <person name="Davies R."/>
            <person name="Gaudet P."/>
            <person name="Fey P."/>
            <person name="Pilcher K."/>
            <person name="Chen G."/>
            <person name="Saunders D."/>
            <person name="Sodergren E.J."/>
            <person name="Davis P."/>
            <person name="Kerhornou A."/>
            <person name="Nie X."/>
            <person name="Hall N."/>
            <person name="Anjard C."/>
            <person name="Hemphill L."/>
            <person name="Bason N."/>
            <person name="Farbrother P."/>
            <person name="Desany B."/>
            <person name="Just E."/>
            <person name="Morio T."/>
            <person name="Rost R."/>
            <person name="Churcher C.M."/>
            <person name="Cooper J."/>
            <person name="Haydock S."/>
            <person name="van Driessche N."/>
            <person name="Cronin A."/>
            <person name="Goodhead I."/>
            <person name="Muzny D.M."/>
            <person name="Mourier T."/>
            <person name="Pain A."/>
            <person name="Lu M."/>
            <person name="Harper D."/>
            <person name="Lindsay R."/>
            <person name="Hauser H."/>
            <person name="James K.D."/>
            <person name="Quiles M."/>
            <person name="Madan Babu M."/>
            <person name="Saito T."/>
            <person name="Buchrieser C."/>
            <person name="Wardroper A."/>
            <person name="Felder M."/>
            <person name="Thangavelu M."/>
            <person name="Johnson D."/>
            <person name="Knights A."/>
            <person name="Loulseged H."/>
            <person name="Mungall K.L."/>
            <person name="Oliver K."/>
            <person name="Price C."/>
            <person name="Quail M.A."/>
            <person name="Urushihara H."/>
            <person name="Hernandez J."/>
            <person name="Rabbinowitsch E."/>
            <person name="Steffen D."/>
            <person name="Sanders M."/>
            <person name="Ma J."/>
            <person name="Kohara Y."/>
            <person name="Sharp S."/>
            <person name="Simmonds M.N."/>
            <person name="Spiegler S."/>
            <person name="Tivey A."/>
            <person name="Sugano S."/>
            <person name="White B."/>
            <person name="Walker D."/>
            <person name="Woodward J.R."/>
            <person name="Winckler T."/>
            <person name="Tanaka Y."/>
            <person name="Shaulsky G."/>
            <person name="Schleicher M."/>
            <person name="Weinstock G.M."/>
            <person name="Rosenthal A."/>
            <person name="Cox E.C."/>
            <person name="Chisholm R.L."/>
            <person name="Gibbs R.A."/>
            <person name="Loomis W.F."/>
            <person name="Platzer M."/>
            <person name="Kay R.R."/>
            <person name="Williams J.G."/>
            <person name="Dear P.H."/>
            <person name="Noegel A.A."/>
            <person name="Barrell B.G."/>
            <person name="Kuspa A."/>
        </authorList>
    </citation>
    <scope>NUCLEOTIDE SEQUENCE [LARGE SCALE GENOMIC DNA]</scope>
    <source>
        <strain>AX4</strain>
    </source>
</reference>
<comment type="function">
    <text evidence="1">Cotranslationally removes the N-terminal methionine from nascent proteins. The N-terminal methionine is often cleaved when the second residue in the primary sequence is small and uncharged (Met-Ala-, Cys, Gly, Pro, Ser, Thr, or Val).</text>
</comment>
<comment type="catalytic activity">
    <reaction evidence="1">
        <text>Release of N-terminal amino acids, preferentially methionine, from peptides and arylamides.</text>
        <dbReference type="EC" id="3.4.11.18"/>
    </reaction>
</comment>
<comment type="cofactor">
    <cofactor evidence="1">
        <name>Co(2+)</name>
        <dbReference type="ChEBI" id="CHEBI:48828"/>
    </cofactor>
    <cofactor evidence="1">
        <name>Zn(2+)</name>
        <dbReference type="ChEBI" id="CHEBI:29105"/>
    </cofactor>
    <cofactor evidence="1">
        <name>Mn(2+)</name>
        <dbReference type="ChEBI" id="CHEBI:29035"/>
    </cofactor>
    <cofactor evidence="1">
        <name>Fe(2+)</name>
        <dbReference type="ChEBI" id="CHEBI:29033"/>
    </cofactor>
    <text evidence="1">Binds 2 divalent metal cations per subunit. Has a high-affinity and a low affinity metal-binding site. The true nature of the physiological cofactor is under debate. The enzyme is active with cobalt, zinc, manganese or divalent iron ions. Most likely, methionine aminopeptidases function as mononuclear Fe(2+)-metalloproteases under physiological conditions, and the catalytically relevant metal-binding site has been assigned to the histidine-containing high-affinity site.</text>
</comment>
<comment type="subcellular location">
    <subcellularLocation>
        <location evidence="1">Cytoplasm</location>
    </subcellularLocation>
</comment>
<comment type="similarity">
    <text evidence="1">Belongs to the peptidase M24A family. Methionine aminopeptidase eukaryotic type 2 subfamily.</text>
</comment>
<keyword id="KW-0031">Aminopeptidase</keyword>
<keyword id="KW-0963">Cytoplasm</keyword>
<keyword id="KW-0378">Hydrolase</keyword>
<keyword id="KW-0479">Metal-binding</keyword>
<keyword id="KW-0645">Protease</keyword>
<keyword id="KW-1185">Reference proteome</keyword>
<dbReference type="EC" id="3.4.11.18" evidence="1"/>
<dbReference type="EMBL" id="AAFI02000005">
    <property type="protein sequence ID" value="EAL72482.3"/>
    <property type="molecule type" value="Genomic_DNA"/>
</dbReference>
<dbReference type="RefSeq" id="XP_646660.3">
    <property type="nucleotide sequence ID" value="XM_641568.3"/>
</dbReference>
<dbReference type="SMR" id="Q55C21"/>
<dbReference type="FunCoup" id="Q55C21">
    <property type="interactions" value="993"/>
</dbReference>
<dbReference type="STRING" id="44689.Q55C21"/>
<dbReference type="MEROPS" id="M24.002"/>
<dbReference type="PaxDb" id="44689-DDB0304991"/>
<dbReference type="EnsemblProtists" id="EAL72482">
    <property type="protein sequence ID" value="EAL72482"/>
    <property type="gene ID" value="DDB_G0270264"/>
</dbReference>
<dbReference type="GeneID" id="8617632"/>
<dbReference type="KEGG" id="ddi:DDB_G0270264"/>
<dbReference type="dictyBase" id="DDB_G0270264">
    <property type="gene designation" value="metap2"/>
</dbReference>
<dbReference type="VEuPathDB" id="AmoebaDB:DDB_G0270264"/>
<dbReference type="eggNOG" id="KOG2775">
    <property type="taxonomic scope" value="Eukaryota"/>
</dbReference>
<dbReference type="HOGENOM" id="CLU_015857_7_1_1"/>
<dbReference type="InParanoid" id="Q55C21"/>
<dbReference type="OMA" id="PFAKRWL"/>
<dbReference type="PhylomeDB" id="Q55C21"/>
<dbReference type="Reactome" id="R-DDI-2514859">
    <property type="pathway name" value="Inactivation, recovery and regulation of the phototransduction cascade"/>
</dbReference>
<dbReference type="PRO" id="PR:Q55C21"/>
<dbReference type="Proteomes" id="UP000002195">
    <property type="component" value="Chromosome 1"/>
</dbReference>
<dbReference type="GO" id="GO:0005737">
    <property type="term" value="C:cytoplasm"/>
    <property type="evidence" value="ECO:0000318"/>
    <property type="project" value="GO_Central"/>
</dbReference>
<dbReference type="GO" id="GO:0045335">
    <property type="term" value="C:phagocytic vesicle"/>
    <property type="evidence" value="ECO:0007005"/>
    <property type="project" value="dictyBase"/>
</dbReference>
<dbReference type="GO" id="GO:0004177">
    <property type="term" value="F:aminopeptidase activity"/>
    <property type="evidence" value="ECO:0000318"/>
    <property type="project" value="GO_Central"/>
</dbReference>
<dbReference type="GO" id="GO:0004239">
    <property type="term" value="F:initiator methionyl aminopeptidase activity"/>
    <property type="evidence" value="ECO:0007669"/>
    <property type="project" value="UniProtKB-UniRule"/>
</dbReference>
<dbReference type="GO" id="GO:0046872">
    <property type="term" value="F:metal ion binding"/>
    <property type="evidence" value="ECO:0007669"/>
    <property type="project" value="UniProtKB-UniRule"/>
</dbReference>
<dbReference type="GO" id="GO:0070006">
    <property type="term" value="F:metalloaminopeptidase activity"/>
    <property type="evidence" value="ECO:0007669"/>
    <property type="project" value="UniProtKB-UniRule"/>
</dbReference>
<dbReference type="GO" id="GO:0008235">
    <property type="term" value="F:metalloexopeptidase activity"/>
    <property type="evidence" value="ECO:0000318"/>
    <property type="project" value="GO_Central"/>
</dbReference>
<dbReference type="GO" id="GO:0006508">
    <property type="term" value="P:proteolysis"/>
    <property type="evidence" value="ECO:0007669"/>
    <property type="project" value="UniProtKB-KW"/>
</dbReference>
<dbReference type="CDD" id="cd01088">
    <property type="entry name" value="MetAP2"/>
    <property type="match status" value="1"/>
</dbReference>
<dbReference type="Gene3D" id="3.90.230.10">
    <property type="entry name" value="Creatinase/methionine aminopeptidase superfamily"/>
    <property type="match status" value="1"/>
</dbReference>
<dbReference type="Gene3D" id="1.10.10.10">
    <property type="entry name" value="Winged helix-like DNA-binding domain superfamily/Winged helix DNA-binding domain"/>
    <property type="match status" value="1"/>
</dbReference>
<dbReference type="HAMAP" id="MF_03175">
    <property type="entry name" value="MetAP_2_euk"/>
    <property type="match status" value="1"/>
</dbReference>
<dbReference type="InterPro" id="IPR036005">
    <property type="entry name" value="Creatinase/aminopeptidase-like"/>
</dbReference>
<dbReference type="InterPro" id="IPR050247">
    <property type="entry name" value="Met_Aminopeptidase_Type2"/>
</dbReference>
<dbReference type="InterPro" id="IPR000994">
    <property type="entry name" value="Pept_M24"/>
</dbReference>
<dbReference type="InterPro" id="IPR001714">
    <property type="entry name" value="Pept_M24_MAP"/>
</dbReference>
<dbReference type="InterPro" id="IPR002468">
    <property type="entry name" value="Pept_M24A_MAP2"/>
</dbReference>
<dbReference type="InterPro" id="IPR018349">
    <property type="entry name" value="Pept_M24A_MAP2_BS"/>
</dbReference>
<dbReference type="InterPro" id="IPR036388">
    <property type="entry name" value="WH-like_DNA-bd_sf"/>
</dbReference>
<dbReference type="InterPro" id="IPR036390">
    <property type="entry name" value="WH_DNA-bd_sf"/>
</dbReference>
<dbReference type="NCBIfam" id="TIGR00501">
    <property type="entry name" value="met_pdase_II"/>
    <property type="match status" value="1"/>
</dbReference>
<dbReference type="PANTHER" id="PTHR45777">
    <property type="entry name" value="METHIONINE AMINOPEPTIDASE 2"/>
    <property type="match status" value="1"/>
</dbReference>
<dbReference type="PANTHER" id="PTHR45777:SF2">
    <property type="entry name" value="METHIONINE AMINOPEPTIDASE 2"/>
    <property type="match status" value="1"/>
</dbReference>
<dbReference type="Pfam" id="PF00557">
    <property type="entry name" value="Peptidase_M24"/>
    <property type="match status" value="1"/>
</dbReference>
<dbReference type="PRINTS" id="PR00599">
    <property type="entry name" value="MAPEPTIDASE"/>
</dbReference>
<dbReference type="SUPFAM" id="SSF55920">
    <property type="entry name" value="Creatinase/aminopeptidase"/>
    <property type="match status" value="1"/>
</dbReference>
<dbReference type="SUPFAM" id="SSF46785">
    <property type="entry name" value="Winged helix' DNA-binding domain"/>
    <property type="match status" value="1"/>
</dbReference>
<dbReference type="PROSITE" id="PS01202">
    <property type="entry name" value="MAP_2"/>
    <property type="match status" value="1"/>
</dbReference>
<proteinExistence type="inferred from homology"/>
<feature type="chain" id="PRO_0000328464" description="Methionine aminopeptidase 2">
    <location>
        <begin position="1"/>
        <end position="436"/>
    </location>
</feature>
<feature type="region of interest" description="Disordered" evidence="2">
    <location>
        <begin position="1"/>
        <end position="61"/>
    </location>
</feature>
<feature type="compositionally biased region" description="Acidic residues" evidence="2">
    <location>
        <begin position="16"/>
        <end position="26"/>
    </location>
</feature>
<feature type="compositionally biased region" description="Basic residues" evidence="2">
    <location>
        <begin position="44"/>
        <end position="56"/>
    </location>
</feature>
<feature type="binding site" evidence="1">
    <location>
        <position position="191"/>
    </location>
    <ligand>
        <name>substrate</name>
    </ligand>
</feature>
<feature type="binding site" evidence="1">
    <location>
        <position position="211"/>
    </location>
    <ligand>
        <name>a divalent metal cation</name>
        <dbReference type="ChEBI" id="CHEBI:60240"/>
        <label>1</label>
    </ligand>
</feature>
<feature type="binding site" evidence="1">
    <location>
        <position position="222"/>
    </location>
    <ligand>
        <name>a divalent metal cation</name>
        <dbReference type="ChEBI" id="CHEBI:60240"/>
        <label>1</label>
    </ligand>
</feature>
<feature type="binding site" evidence="1">
    <location>
        <position position="222"/>
    </location>
    <ligand>
        <name>a divalent metal cation</name>
        <dbReference type="ChEBI" id="CHEBI:60240"/>
        <label>2</label>
        <note>catalytic</note>
    </ligand>
</feature>
<feature type="binding site" evidence="1">
    <location>
        <position position="291"/>
    </location>
    <ligand>
        <name>a divalent metal cation</name>
        <dbReference type="ChEBI" id="CHEBI:60240"/>
        <label>2</label>
        <note>catalytic</note>
    </ligand>
</feature>
<feature type="binding site" evidence="1">
    <location>
        <position position="299"/>
    </location>
    <ligand>
        <name>substrate</name>
    </ligand>
</feature>
<feature type="binding site" evidence="1">
    <location>
        <position position="324"/>
    </location>
    <ligand>
        <name>a divalent metal cation</name>
        <dbReference type="ChEBI" id="CHEBI:60240"/>
        <label>2</label>
        <note>catalytic</note>
    </ligand>
</feature>
<feature type="binding site" evidence="1">
    <location>
        <position position="417"/>
    </location>
    <ligand>
        <name>a divalent metal cation</name>
        <dbReference type="ChEBI" id="CHEBI:60240"/>
        <label>1</label>
    </ligand>
</feature>
<feature type="binding site" evidence="1">
    <location>
        <position position="417"/>
    </location>
    <ligand>
        <name>a divalent metal cation</name>
        <dbReference type="ChEBI" id="CHEBI:60240"/>
        <label>2</label>
        <note>catalytic</note>
    </ligand>
</feature>
<accession>Q55C21</accession>
<sequence length="436" mass="48561">MSEIQPKTEVPPKTVEEEEESDDEEDNTKVTEGGNPTGGEGAAKKKKKKNKKKKKAAPVASAADIIDSKPIPSGLVQTNPPTIPVSKQFSNGVYPMGEIQEYRDSNSYRTTSEEKRLEERIHANIYNDVRRAAEVHRQVRKYVQGIVKPGLGLTELVESLENASRTLIEADGLKAGIAFPTGVSLNHIAAHFTPNTGDKTVLKKDDVLKIDFGTHVNGYIIDCAFTVTFDEKYDKLKDAVREATNTGIYHAGIDARLGEIGAAIQEVMESHEIELNGKTYPIRSIRNLNGHSIRPYVIHGGKTVPIVRGGEMTKMEEGEFYAIETFGSTGRAQVIEDLECSHYMKTDYQTTVRLPKAKQLLQYINKNYDTLCFCRRWLDRAGEDKHILALNNLCDLGIIQRHAPLVDSKGSYVAQYEHTLLLKPTAKEVLSRGDDY</sequence>
<evidence type="ECO:0000255" key="1">
    <source>
        <dbReference type="HAMAP-Rule" id="MF_03175"/>
    </source>
</evidence>
<evidence type="ECO:0000256" key="2">
    <source>
        <dbReference type="SAM" id="MobiDB-lite"/>
    </source>
</evidence>
<protein>
    <recommendedName>
        <fullName evidence="1">Methionine aminopeptidase 2</fullName>
        <shortName evidence="1">MAP 2</shortName>
        <shortName evidence="1">MetAP 2</shortName>
        <ecNumber evidence="1">3.4.11.18</ecNumber>
    </recommendedName>
    <alternativeName>
        <fullName evidence="1">Peptidase M</fullName>
    </alternativeName>
</protein>
<name>MAP2_DICDI</name>
<gene>
    <name type="primary">metap2</name>
    <name type="ORF">DDB_G0270264</name>
</gene>
<organism>
    <name type="scientific">Dictyostelium discoideum</name>
    <name type="common">Social amoeba</name>
    <dbReference type="NCBI Taxonomy" id="44689"/>
    <lineage>
        <taxon>Eukaryota</taxon>
        <taxon>Amoebozoa</taxon>
        <taxon>Evosea</taxon>
        <taxon>Eumycetozoa</taxon>
        <taxon>Dictyostelia</taxon>
        <taxon>Dictyosteliales</taxon>
        <taxon>Dictyosteliaceae</taxon>
        <taxon>Dictyostelium</taxon>
    </lineage>
</organism>